<protein>
    <recommendedName>
        <fullName evidence="1">Large ribosomal subunit protein uL5</fullName>
    </recommendedName>
    <alternativeName>
        <fullName evidence="2">50S ribosomal protein L5</fullName>
    </alternativeName>
</protein>
<comment type="function">
    <text evidence="1">This is one of the proteins that bind and probably mediate the attachment of the 5S RNA into the large ribosomal subunit, where it forms part of the central protuberance. In the 70S ribosome it contacts protein S13 of the 30S subunit (bridge B1b), connecting the 2 subunits; this bridge is implicated in subunit movement. Contacts the P site tRNA; the 5S rRNA and some of its associated proteins might help stabilize positioning of ribosome-bound tRNAs.</text>
</comment>
<comment type="subunit">
    <text evidence="1">Part of the 50S ribosomal subunit; part of the 5S rRNA/L5/L18/L25 subcomplex. Contacts the 5S rRNA and the P site tRNA. Forms a bridge to the 30S subunit in the 70S ribosome.</text>
</comment>
<comment type="similarity">
    <text evidence="1">Belongs to the universal ribosomal protein uL5 family.</text>
</comment>
<keyword id="KW-0687">Ribonucleoprotein</keyword>
<keyword id="KW-0689">Ribosomal protein</keyword>
<keyword id="KW-0694">RNA-binding</keyword>
<keyword id="KW-0699">rRNA-binding</keyword>
<keyword id="KW-0820">tRNA-binding</keyword>
<feature type="chain" id="PRO_1000142469" description="Large ribosomal subunit protein uL5">
    <location>
        <begin position="1"/>
        <end position="181"/>
    </location>
</feature>
<proteinExistence type="inferred from homology"/>
<evidence type="ECO:0000255" key="1">
    <source>
        <dbReference type="HAMAP-Rule" id="MF_01333"/>
    </source>
</evidence>
<evidence type="ECO:0000305" key="2"/>
<sequence length="181" mass="20639">MSDTLKKYYYKKIVPKLIDQFKYKNIHQVPKLVKVTINRGLGEASQNAKALDSSIKEIATITGQKPVVTRAKKAIAGFKIRQGMPVGVMVTLRSQRMYEFIERLINLALPRIRDFRGINPKSFDGRGNYSLGVKEQLIFPEIEYDKIDQIRGMDISIITTAKTDEEGRALLKEMGMPFRSN</sequence>
<gene>
    <name evidence="1" type="primary">rplE</name>
    <name evidence="1" type="synonym">rpl5</name>
    <name type="ordered locus">Tery_3000</name>
</gene>
<accession>Q110B9</accession>
<organism>
    <name type="scientific">Trichodesmium erythraeum (strain IMS101)</name>
    <dbReference type="NCBI Taxonomy" id="203124"/>
    <lineage>
        <taxon>Bacteria</taxon>
        <taxon>Bacillati</taxon>
        <taxon>Cyanobacteriota</taxon>
        <taxon>Cyanophyceae</taxon>
        <taxon>Oscillatoriophycideae</taxon>
        <taxon>Oscillatoriales</taxon>
        <taxon>Microcoleaceae</taxon>
        <taxon>Trichodesmium</taxon>
    </lineage>
</organism>
<name>RL5_TRIEI</name>
<dbReference type="EMBL" id="CP000393">
    <property type="protein sequence ID" value="ABG52155.1"/>
    <property type="molecule type" value="Genomic_DNA"/>
</dbReference>
<dbReference type="RefSeq" id="WP_011612510.1">
    <property type="nucleotide sequence ID" value="NC_008312.1"/>
</dbReference>
<dbReference type="SMR" id="Q110B9"/>
<dbReference type="STRING" id="203124.Tery_3000"/>
<dbReference type="KEGG" id="ter:Tery_3000"/>
<dbReference type="eggNOG" id="COG0094">
    <property type="taxonomic scope" value="Bacteria"/>
</dbReference>
<dbReference type="HOGENOM" id="CLU_061015_2_1_3"/>
<dbReference type="OrthoDB" id="9806626at2"/>
<dbReference type="GO" id="GO:1990904">
    <property type="term" value="C:ribonucleoprotein complex"/>
    <property type="evidence" value="ECO:0007669"/>
    <property type="project" value="UniProtKB-KW"/>
</dbReference>
<dbReference type="GO" id="GO:0005840">
    <property type="term" value="C:ribosome"/>
    <property type="evidence" value="ECO:0007669"/>
    <property type="project" value="UniProtKB-KW"/>
</dbReference>
<dbReference type="GO" id="GO:0019843">
    <property type="term" value="F:rRNA binding"/>
    <property type="evidence" value="ECO:0007669"/>
    <property type="project" value="UniProtKB-UniRule"/>
</dbReference>
<dbReference type="GO" id="GO:0003735">
    <property type="term" value="F:structural constituent of ribosome"/>
    <property type="evidence" value="ECO:0007669"/>
    <property type="project" value="InterPro"/>
</dbReference>
<dbReference type="GO" id="GO:0000049">
    <property type="term" value="F:tRNA binding"/>
    <property type="evidence" value="ECO:0007669"/>
    <property type="project" value="UniProtKB-UniRule"/>
</dbReference>
<dbReference type="GO" id="GO:0006412">
    <property type="term" value="P:translation"/>
    <property type="evidence" value="ECO:0007669"/>
    <property type="project" value="UniProtKB-UniRule"/>
</dbReference>
<dbReference type="FunFam" id="3.30.1440.10:FF:000001">
    <property type="entry name" value="50S ribosomal protein L5"/>
    <property type="match status" value="1"/>
</dbReference>
<dbReference type="Gene3D" id="3.30.1440.10">
    <property type="match status" value="1"/>
</dbReference>
<dbReference type="HAMAP" id="MF_01333_B">
    <property type="entry name" value="Ribosomal_uL5_B"/>
    <property type="match status" value="1"/>
</dbReference>
<dbReference type="InterPro" id="IPR002132">
    <property type="entry name" value="Ribosomal_uL5"/>
</dbReference>
<dbReference type="InterPro" id="IPR020930">
    <property type="entry name" value="Ribosomal_uL5_bac-type"/>
</dbReference>
<dbReference type="InterPro" id="IPR031309">
    <property type="entry name" value="Ribosomal_uL5_C"/>
</dbReference>
<dbReference type="InterPro" id="IPR020929">
    <property type="entry name" value="Ribosomal_uL5_CS"/>
</dbReference>
<dbReference type="InterPro" id="IPR022803">
    <property type="entry name" value="Ribosomal_uL5_dom_sf"/>
</dbReference>
<dbReference type="InterPro" id="IPR031310">
    <property type="entry name" value="Ribosomal_uL5_N"/>
</dbReference>
<dbReference type="NCBIfam" id="NF000585">
    <property type="entry name" value="PRK00010.1"/>
    <property type="match status" value="1"/>
</dbReference>
<dbReference type="PANTHER" id="PTHR11994">
    <property type="entry name" value="60S RIBOSOMAL PROTEIN L11-RELATED"/>
    <property type="match status" value="1"/>
</dbReference>
<dbReference type="Pfam" id="PF00281">
    <property type="entry name" value="Ribosomal_L5"/>
    <property type="match status" value="1"/>
</dbReference>
<dbReference type="Pfam" id="PF00673">
    <property type="entry name" value="Ribosomal_L5_C"/>
    <property type="match status" value="1"/>
</dbReference>
<dbReference type="PIRSF" id="PIRSF002161">
    <property type="entry name" value="Ribosomal_L5"/>
    <property type="match status" value="1"/>
</dbReference>
<dbReference type="SUPFAM" id="SSF55282">
    <property type="entry name" value="RL5-like"/>
    <property type="match status" value="1"/>
</dbReference>
<dbReference type="PROSITE" id="PS00358">
    <property type="entry name" value="RIBOSOMAL_L5"/>
    <property type="match status" value="1"/>
</dbReference>
<reference key="1">
    <citation type="journal article" date="2015" name="Proc. Natl. Acad. Sci. U.S.A.">
        <title>Trichodesmium genome maintains abundant, widespread noncoding DNA in situ, despite oligotrophic lifestyle.</title>
        <authorList>
            <person name="Walworth N."/>
            <person name="Pfreundt U."/>
            <person name="Nelson W.C."/>
            <person name="Mincer T."/>
            <person name="Heidelberg J.F."/>
            <person name="Fu F."/>
            <person name="Waterbury J.B."/>
            <person name="Glavina del Rio T."/>
            <person name="Goodwin L."/>
            <person name="Kyrpides N.C."/>
            <person name="Land M.L."/>
            <person name="Woyke T."/>
            <person name="Hutchins D.A."/>
            <person name="Hess W.R."/>
            <person name="Webb E.A."/>
        </authorList>
    </citation>
    <scope>NUCLEOTIDE SEQUENCE [LARGE SCALE GENOMIC DNA]</scope>
    <source>
        <strain>IMS101</strain>
    </source>
</reference>